<sequence length="297" mass="33042">MANQLKVGIIGAGAMGLLYAANFANISELTLFTRRKEQSDLLNQKGLSLKDNSELKNIHIQATVITDAEKLSEQELLIIAVKQYSLKTILPLLRSIPERVPLLFIQNGAAHLDSMPLLGNKRTILLGISEHGAGREDDTTVIWRGHGRTKYSIYQGELNEAVIKILDSNPDFPVEKHASYLDIINEKLFINAVINPLTAVLQVQNGKLLENKEWHELLKTIVKEIQTVLPVENALEKVEVICQVTATNFSSMALDRMNNRMTEIDGIVLPILEKGESLPTLHALYHLIKGLEGESDV</sequence>
<organism>
    <name type="scientific">Listeria monocytogenes serovar 1/2a (strain ATCC BAA-679 / EGD-e)</name>
    <dbReference type="NCBI Taxonomy" id="169963"/>
    <lineage>
        <taxon>Bacteria</taxon>
        <taxon>Bacillati</taxon>
        <taxon>Bacillota</taxon>
        <taxon>Bacilli</taxon>
        <taxon>Bacillales</taxon>
        <taxon>Listeriaceae</taxon>
        <taxon>Listeria</taxon>
    </lineage>
</organism>
<gene>
    <name type="ordered locus">lmo2046</name>
</gene>
<evidence type="ECO:0000250" key="1">
    <source>
        <dbReference type="UniProtKB" id="P0A9J4"/>
    </source>
</evidence>
<evidence type="ECO:0000305" key="2"/>
<keyword id="KW-0963">Cytoplasm</keyword>
<keyword id="KW-0521">NADP</keyword>
<keyword id="KW-0560">Oxidoreductase</keyword>
<keyword id="KW-0566">Pantothenate biosynthesis</keyword>
<keyword id="KW-1185">Reference proteome</keyword>
<name>PANE_LISMO</name>
<feature type="chain" id="PRO_0000157315" description="2-dehydropantoate 2-reductase">
    <location>
        <begin position="1"/>
        <end position="297"/>
    </location>
</feature>
<feature type="active site" description="Proton donor" evidence="1">
    <location>
        <position position="187"/>
    </location>
</feature>
<feature type="binding site" evidence="1">
    <location>
        <begin position="11"/>
        <end position="16"/>
    </location>
    <ligand>
        <name>NADP(+)</name>
        <dbReference type="ChEBI" id="CHEBI:58349"/>
    </ligand>
</feature>
<feature type="binding site" evidence="1">
    <location>
        <position position="107"/>
    </location>
    <ligand>
        <name>NADP(+)</name>
        <dbReference type="ChEBI" id="CHEBI:58349"/>
    </ligand>
</feature>
<feature type="binding site" evidence="1">
    <location>
        <position position="107"/>
    </location>
    <ligand>
        <name>substrate</name>
    </ligand>
</feature>
<feature type="binding site" evidence="1">
    <location>
        <position position="133"/>
    </location>
    <ligand>
        <name>NADP(+)</name>
        <dbReference type="ChEBI" id="CHEBI:58349"/>
    </ligand>
</feature>
<feature type="binding site" evidence="1">
    <location>
        <position position="191"/>
    </location>
    <ligand>
        <name>substrate</name>
    </ligand>
</feature>
<feature type="binding site" evidence="1">
    <location>
        <position position="195"/>
    </location>
    <ligand>
        <name>substrate</name>
    </ligand>
</feature>
<feature type="binding site" evidence="1">
    <location>
        <position position="205"/>
    </location>
    <ligand>
        <name>substrate</name>
    </ligand>
</feature>
<feature type="binding site" evidence="1">
    <location>
        <position position="251"/>
    </location>
    <ligand>
        <name>substrate</name>
    </ligand>
</feature>
<feature type="binding site" evidence="1">
    <location>
        <position position="263"/>
    </location>
    <ligand>
        <name>NADP(+)</name>
        <dbReference type="ChEBI" id="CHEBI:58349"/>
    </ligand>
</feature>
<dbReference type="EC" id="1.1.1.169" evidence="1"/>
<dbReference type="EMBL" id="AL591982">
    <property type="protein sequence ID" value="CAD00124.1"/>
    <property type="molecule type" value="Genomic_DNA"/>
</dbReference>
<dbReference type="PIR" id="AF1330">
    <property type="entry name" value="AF1330"/>
</dbReference>
<dbReference type="RefSeq" id="NP_465570.1">
    <property type="nucleotide sequence ID" value="NC_003210.1"/>
</dbReference>
<dbReference type="RefSeq" id="WP_010989882.1">
    <property type="nucleotide sequence ID" value="NZ_CP149495.1"/>
</dbReference>
<dbReference type="SMR" id="Q8Y5L2"/>
<dbReference type="STRING" id="169963.gene:17594731"/>
<dbReference type="PaxDb" id="169963-lmo2046"/>
<dbReference type="EnsemblBacteria" id="CAD00124">
    <property type="protein sequence ID" value="CAD00124"/>
    <property type="gene ID" value="CAD00124"/>
</dbReference>
<dbReference type="GeneID" id="986332"/>
<dbReference type="KEGG" id="lmo:lmo2046"/>
<dbReference type="PATRIC" id="fig|169963.11.peg.2094"/>
<dbReference type="eggNOG" id="COG1893">
    <property type="taxonomic scope" value="Bacteria"/>
</dbReference>
<dbReference type="HOGENOM" id="CLU_031468_0_1_9"/>
<dbReference type="OrthoDB" id="9800163at2"/>
<dbReference type="PhylomeDB" id="Q8Y5L2"/>
<dbReference type="BioCyc" id="LMON169963:LMO2046-MONOMER"/>
<dbReference type="UniPathway" id="UPA00028">
    <property type="reaction ID" value="UER00004"/>
</dbReference>
<dbReference type="Proteomes" id="UP000000817">
    <property type="component" value="Chromosome"/>
</dbReference>
<dbReference type="GO" id="GO:0005737">
    <property type="term" value="C:cytoplasm"/>
    <property type="evidence" value="ECO:0000318"/>
    <property type="project" value="GO_Central"/>
</dbReference>
<dbReference type="GO" id="GO:0008677">
    <property type="term" value="F:2-dehydropantoate 2-reductase activity"/>
    <property type="evidence" value="ECO:0000318"/>
    <property type="project" value="GO_Central"/>
</dbReference>
<dbReference type="GO" id="GO:0050661">
    <property type="term" value="F:NADP binding"/>
    <property type="evidence" value="ECO:0000318"/>
    <property type="project" value="GO_Central"/>
</dbReference>
<dbReference type="GO" id="GO:0015940">
    <property type="term" value="P:pantothenate biosynthetic process"/>
    <property type="evidence" value="ECO:0007669"/>
    <property type="project" value="UniProtKB-UniPathway"/>
</dbReference>
<dbReference type="Gene3D" id="1.10.1040.10">
    <property type="entry name" value="N-(1-d-carboxylethyl)-l-norvaline Dehydrogenase, domain 2"/>
    <property type="match status" value="1"/>
</dbReference>
<dbReference type="Gene3D" id="3.40.50.720">
    <property type="entry name" value="NAD(P)-binding Rossmann-like Domain"/>
    <property type="match status" value="1"/>
</dbReference>
<dbReference type="InterPro" id="IPR008927">
    <property type="entry name" value="6-PGluconate_DH-like_C_sf"/>
</dbReference>
<dbReference type="InterPro" id="IPR013328">
    <property type="entry name" value="6PGD_dom2"/>
</dbReference>
<dbReference type="InterPro" id="IPR003710">
    <property type="entry name" value="ApbA"/>
</dbReference>
<dbReference type="InterPro" id="IPR050838">
    <property type="entry name" value="Ketopantoate_reductase"/>
</dbReference>
<dbReference type="InterPro" id="IPR013752">
    <property type="entry name" value="KPA_reductase"/>
</dbReference>
<dbReference type="InterPro" id="IPR013332">
    <property type="entry name" value="KPR_N"/>
</dbReference>
<dbReference type="InterPro" id="IPR036291">
    <property type="entry name" value="NAD(P)-bd_dom_sf"/>
</dbReference>
<dbReference type="NCBIfam" id="TIGR00745">
    <property type="entry name" value="apbA_panE"/>
    <property type="match status" value="1"/>
</dbReference>
<dbReference type="NCBIfam" id="NF005093">
    <property type="entry name" value="PRK06522.2-4"/>
    <property type="match status" value="1"/>
</dbReference>
<dbReference type="PANTHER" id="PTHR43765:SF2">
    <property type="entry name" value="2-DEHYDROPANTOATE 2-REDUCTASE"/>
    <property type="match status" value="1"/>
</dbReference>
<dbReference type="PANTHER" id="PTHR43765">
    <property type="entry name" value="2-DEHYDROPANTOATE 2-REDUCTASE-RELATED"/>
    <property type="match status" value="1"/>
</dbReference>
<dbReference type="Pfam" id="PF02558">
    <property type="entry name" value="ApbA"/>
    <property type="match status" value="1"/>
</dbReference>
<dbReference type="Pfam" id="PF08546">
    <property type="entry name" value="ApbA_C"/>
    <property type="match status" value="1"/>
</dbReference>
<dbReference type="SUPFAM" id="SSF48179">
    <property type="entry name" value="6-phosphogluconate dehydrogenase C-terminal domain-like"/>
    <property type="match status" value="1"/>
</dbReference>
<dbReference type="SUPFAM" id="SSF51735">
    <property type="entry name" value="NAD(P)-binding Rossmann-fold domains"/>
    <property type="match status" value="1"/>
</dbReference>
<proteinExistence type="inferred from homology"/>
<comment type="function">
    <text evidence="1">Catalyzes the NADPH-dependent reduction of ketopantoate into pantoic acid.</text>
</comment>
<comment type="catalytic activity">
    <reaction evidence="1">
        <text>(R)-pantoate + NADP(+) = 2-dehydropantoate + NADPH + H(+)</text>
        <dbReference type="Rhea" id="RHEA:16233"/>
        <dbReference type="ChEBI" id="CHEBI:11561"/>
        <dbReference type="ChEBI" id="CHEBI:15378"/>
        <dbReference type="ChEBI" id="CHEBI:15980"/>
        <dbReference type="ChEBI" id="CHEBI:57783"/>
        <dbReference type="ChEBI" id="CHEBI:58349"/>
        <dbReference type="EC" id="1.1.1.169"/>
    </reaction>
</comment>
<comment type="pathway">
    <text evidence="1">Cofactor biosynthesis; (R)-pantothenate biosynthesis; (R)-pantoate from 3-methyl-2-oxobutanoate: step 2/2.</text>
</comment>
<comment type="subcellular location">
    <subcellularLocation>
        <location evidence="1">Cytoplasm</location>
    </subcellularLocation>
</comment>
<comment type="similarity">
    <text evidence="2">Belongs to the ketopantoate reductase family.</text>
</comment>
<accession>Q8Y5L2</accession>
<reference key="1">
    <citation type="journal article" date="2001" name="Science">
        <title>Comparative genomics of Listeria species.</title>
        <authorList>
            <person name="Glaser P."/>
            <person name="Frangeul L."/>
            <person name="Buchrieser C."/>
            <person name="Rusniok C."/>
            <person name="Amend A."/>
            <person name="Baquero F."/>
            <person name="Berche P."/>
            <person name="Bloecker H."/>
            <person name="Brandt P."/>
            <person name="Chakraborty T."/>
            <person name="Charbit A."/>
            <person name="Chetouani F."/>
            <person name="Couve E."/>
            <person name="de Daruvar A."/>
            <person name="Dehoux P."/>
            <person name="Domann E."/>
            <person name="Dominguez-Bernal G."/>
            <person name="Duchaud E."/>
            <person name="Durant L."/>
            <person name="Dussurget O."/>
            <person name="Entian K.-D."/>
            <person name="Fsihi H."/>
            <person name="Garcia-del Portillo F."/>
            <person name="Garrido P."/>
            <person name="Gautier L."/>
            <person name="Goebel W."/>
            <person name="Gomez-Lopez N."/>
            <person name="Hain T."/>
            <person name="Hauf J."/>
            <person name="Jackson D."/>
            <person name="Jones L.-M."/>
            <person name="Kaerst U."/>
            <person name="Kreft J."/>
            <person name="Kuhn M."/>
            <person name="Kunst F."/>
            <person name="Kurapkat G."/>
            <person name="Madueno E."/>
            <person name="Maitournam A."/>
            <person name="Mata Vicente J."/>
            <person name="Ng E."/>
            <person name="Nedjari H."/>
            <person name="Nordsiek G."/>
            <person name="Novella S."/>
            <person name="de Pablos B."/>
            <person name="Perez-Diaz J.-C."/>
            <person name="Purcell R."/>
            <person name="Remmel B."/>
            <person name="Rose M."/>
            <person name="Schlueter T."/>
            <person name="Simoes N."/>
            <person name="Tierrez A."/>
            <person name="Vazquez-Boland J.-A."/>
            <person name="Voss H."/>
            <person name="Wehland J."/>
            <person name="Cossart P."/>
        </authorList>
    </citation>
    <scope>NUCLEOTIDE SEQUENCE [LARGE SCALE GENOMIC DNA]</scope>
    <source>
        <strain>ATCC BAA-679 / EGD-e</strain>
    </source>
</reference>
<protein>
    <recommendedName>
        <fullName evidence="1">2-dehydropantoate 2-reductase</fullName>
        <ecNumber evidence="1">1.1.1.169</ecNumber>
    </recommendedName>
    <alternativeName>
        <fullName evidence="1">Ketopantoate reductase</fullName>
        <shortName evidence="1">KPR</shortName>
    </alternativeName>
</protein>